<keyword id="KW-0067">ATP-binding</keyword>
<keyword id="KW-1003">Cell membrane</keyword>
<keyword id="KW-0418">Kinase</keyword>
<keyword id="KW-0472">Membrane</keyword>
<keyword id="KW-0547">Nucleotide-binding</keyword>
<keyword id="KW-0597">Phosphoprotein</keyword>
<keyword id="KW-1185">Reference proteome</keyword>
<keyword id="KW-0808">Transferase</keyword>
<keyword id="KW-0812">Transmembrane</keyword>
<keyword id="KW-1133">Transmembrane helix</keyword>
<keyword id="KW-0902">Two-component regulatory system</keyword>
<organism>
    <name type="scientific">Mycobacterium tuberculosis (strain CDC 1551 / Oshkosh)</name>
    <dbReference type="NCBI Taxonomy" id="83331"/>
    <lineage>
        <taxon>Bacteria</taxon>
        <taxon>Bacillati</taxon>
        <taxon>Actinomycetota</taxon>
        <taxon>Actinomycetes</taxon>
        <taxon>Mycobacteriales</taxon>
        <taxon>Mycobacteriaceae</taxon>
        <taxon>Mycobacterium</taxon>
        <taxon>Mycobacterium tuberculosis complex</taxon>
    </lineage>
</organism>
<feature type="chain" id="PRO_0000428345" description="Sensor-type histidine kinase PrrB">
    <location>
        <begin position="1"/>
        <end position="446"/>
    </location>
</feature>
<feature type="transmembrane region" description="Helical" evidence="2">
    <location>
        <begin position="19"/>
        <end position="39"/>
    </location>
</feature>
<feature type="transmembrane region" description="Helical" evidence="2">
    <location>
        <begin position="151"/>
        <end position="171"/>
    </location>
</feature>
<feature type="domain" description="HAMP" evidence="3">
    <location>
        <begin position="172"/>
        <end position="222"/>
    </location>
</feature>
<feature type="domain" description="Histidine kinase" evidence="4">
    <location>
        <begin position="237"/>
        <end position="446"/>
    </location>
</feature>
<feature type="modified residue" description="Phosphohistidine; by autocatalysis" evidence="4">
    <location>
        <position position="240"/>
    </location>
</feature>
<reference key="1">
    <citation type="journal article" date="2002" name="J. Bacteriol.">
        <title>Whole-genome comparison of Mycobacterium tuberculosis clinical and laboratory strains.</title>
        <authorList>
            <person name="Fleischmann R.D."/>
            <person name="Alland D."/>
            <person name="Eisen J.A."/>
            <person name="Carpenter L."/>
            <person name="White O."/>
            <person name="Peterson J.D."/>
            <person name="DeBoy R.T."/>
            <person name="Dodson R.J."/>
            <person name="Gwinn M.L."/>
            <person name="Haft D.H."/>
            <person name="Hickey E.K."/>
            <person name="Kolonay J.F."/>
            <person name="Nelson W.C."/>
            <person name="Umayam L.A."/>
            <person name="Ermolaeva M.D."/>
            <person name="Salzberg S.L."/>
            <person name="Delcher A."/>
            <person name="Utterback T.R."/>
            <person name="Weidman J.F."/>
            <person name="Khouri H.M."/>
            <person name="Gill J."/>
            <person name="Mikula A."/>
            <person name="Bishai W."/>
            <person name="Jacobs W.R. Jr."/>
            <person name="Venter J.C."/>
            <person name="Fraser C.M."/>
        </authorList>
    </citation>
    <scope>NUCLEOTIDE SEQUENCE [LARGE SCALE GENOMIC DNA]</scope>
    <source>
        <strain>CDC 1551 / Oshkosh</strain>
    </source>
</reference>
<name>PRRB_MYCTO</name>
<gene>
    <name type="primary">prrB</name>
    <name type="ordered locus">MT0925</name>
</gene>
<comment type="function">
    <text evidence="1">Member of the two-component regulatory system PrrB/PrrA that is involved specifically in early intracellular multiplication of Mycobacterium and is essential for its viability. Functions as a sensor protein kinase which is autophosphorylated at a histidine residue and transfers its phosphate group to the conserved aspartic acid residue in the regulatory domain of PrrA. In turn, PrrA binds to the upstream promoter regions of target genes including itself to positively regulate their expression.</text>
</comment>
<comment type="catalytic activity">
    <reaction evidence="1">
        <text>ATP + protein L-histidine = ADP + protein N-phospho-L-histidine.</text>
        <dbReference type="EC" id="2.7.13.3"/>
    </reaction>
</comment>
<comment type="subcellular location">
    <subcellularLocation>
        <location evidence="5">Cell membrane</location>
        <topology evidence="5">Multi-pass membrane protein</topology>
    </subcellularLocation>
</comment>
<comment type="PTM">
    <text evidence="1">Autophosphorylated.</text>
</comment>
<comment type="sequence caution" evidence="5">
    <conflict type="erroneous initiation">
        <sequence resource="EMBL-CDS" id="AAK45172"/>
    </conflict>
</comment>
<proteinExistence type="inferred from homology"/>
<sequence>MNILSRIFARTPSLRTRVVVATAIGAAIPVLIVGTVVWVGITNDRKERLDRRLDEAAGFAIPFVPRGLDEIPRSPNDQDALITVRRGNVIKSNSDITLPKLQDDYADTYVRGVRYRVRTVEIPGPEPTSVAVGATYDATVAETNNLHRRVLLICTFAIGAAAVFAWLLAAFAVRPFKQLAEQTRSIDAGDEAPRVEVHGASEAIEIAEAMRGMLQRIWNEQNRTKEALASARDFAAVSSHELRTPLTAMRTNLEVLSTLDLPDDQRKEVLNDVIRTQSRIEATLSALERLAQGELSTSDDHVPVDITDLLDRAAHDAARIYPDLDVSLVPSPTCIIVGLPAGLRLAVDNAIANAVKHGGATLVQLSAVSSRAGVEIAIDDNGSGVPEGERQVVFERFSRGSTASHSGSGLGLALVAQQAQLHGGTASLENSPLGGARLVLRLPGPS</sequence>
<evidence type="ECO:0000250" key="1">
    <source>
        <dbReference type="UniProtKB" id="P9WGK7"/>
    </source>
</evidence>
<evidence type="ECO:0000255" key="2"/>
<evidence type="ECO:0000255" key="3">
    <source>
        <dbReference type="PROSITE-ProRule" id="PRU00102"/>
    </source>
</evidence>
<evidence type="ECO:0000255" key="4">
    <source>
        <dbReference type="PROSITE-ProRule" id="PRU00107"/>
    </source>
</evidence>
<evidence type="ECO:0000305" key="5"/>
<protein>
    <recommendedName>
        <fullName>Sensor-type histidine kinase PrrB</fullName>
        <ecNumber evidence="1">2.7.13.3</ecNumber>
    </recommendedName>
</protein>
<dbReference type="EC" id="2.7.13.3" evidence="1"/>
<dbReference type="EMBL" id="AE000516">
    <property type="protein sequence ID" value="AAK45172.1"/>
    <property type="status" value="ALT_INIT"/>
    <property type="molecule type" value="Genomic_DNA"/>
</dbReference>
<dbReference type="PIR" id="C70783">
    <property type="entry name" value="C70783"/>
</dbReference>
<dbReference type="RefSeq" id="WP_003404689.1">
    <property type="nucleotide sequence ID" value="NZ_KK341227.1"/>
</dbReference>
<dbReference type="SMR" id="P9WGK6"/>
<dbReference type="GeneID" id="45424865"/>
<dbReference type="KEGG" id="mtc:MT0925"/>
<dbReference type="PATRIC" id="fig|83331.31.peg.994"/>
<dbReference type="HOGENOM" id="CLU_026160_0_0_11"/>
<dbReference type="Proteomes" id="UP000001020">
    <property type="component" value="Chromosome"/>
</dbReference>
<dbReference type="GO" id="GO:0005886">
    <property type="term" value="C:plasma membrane"/>
    <property type="evidence" value="ECO:0007669"/>
    <property type="project" value="UniProtKB-SubCell"/>
</dbReference>
<dbReference type="GO" id="GO:0005524">
    <property type="term" value="F:ATP binding"/>
    <property type="evidence" value="ECO:0007669"/>
    <property type="project" value="UniProtKB-KW"/>
</dbReference>
<dbReference type="GO" id="GO:0000155">
    <property type="term" value="F:phosphorelay sensor kinase activity"/>
    <property type="evidence" value="ECO:0007669"/>
    <property type="project" value="InterPro"/>
</dbReference>
<dbReference type="CDD" id="cd06225">
    <property type="entry name" value="HAMP"/>
    <property type="match status" value="1"/>
</dbReference>
<dbReference type="CDD" id="cd00075">
    <property type="entry name" value="HATPase"/>
    <property type="match status" value="1"/>
</dbReference>
<dbReference type="CDD" id="cd00082">
    <property type="entry name" value="HisKA"/>
    <property type="match status" value="1"/>
</dbReference>
<dbReference type="FunFam" id="3.30.565.10:FF:000068">
    <property type="entry name" value="Sensor-type histidine kinase prrB"/>
    <property type="match status" value="1"/>
</dbReference>
<dbReference type="FunFam" id="1.10.287.130:FF:000095">
    <property type="entry name" value="Two-component sensor histidine kinase"/>
    <property type="match status" value="1"/>
</dbReference>
<dbReference type="Gene3D" id="1.10.287.130">
    <property type="match status" value="1"/>
</dbReference>
<dbReference type="Gene3D" id="6.10.340.10">
    <property type="match status" value="1"/>
</dbReference>
<dbReference type="Gene3D" id="3.30.565.10">
    <property type="entry name" value="Histidine kinase-like ATPase, C-terminal domain"/>
    <property type="match status" value="1"/>
</dbReference>
<dbReference type="InterPro" id="IPR003660">
    <property type="entry name" value="HAMP_dom"/>
</dbReference>
<dbReference type="InterPro" id="IPR036890">
    <property type="entry name" value="HATPase_C_sf"/>
</dbReference>
<dbReference type="InterPro" id="IPR005467">
    <property type="entry name" value="His_kinase_dom"/>
</dbReference>
<dbReference type="InterPro" id="IPR003661">
    <property type="entry name" value="HisK_dim/P_dom"/>
</dbReference>
<dbReference type="InterPro" id="IPR036097">
    <property type="entry name" value="HisK_dim/P_sf"/>
</dbReference>
<dbReference type="InterPro" id="IPR004358">
    <property type="entry name" value="Sig_transdc_His_kin-like_C"/>
</dbReference>
<dbReference type="InterPro" id="IPR050428">
    <property type="entry name" value="TCS_sensor_his_kinase"/>
</dbReference>
<dbReference type="PANTHER" id="PTHR45436:SF5">
    <property type="entry name" value="SENSOR HISTIDINE KINASE TRCS"/>
    <property type="match status" value="1"/>
</dbReference>
<dbReference type="PANTHER" id="PTHR45436">
    <property type="entry name" value="SENSOR HISTIDINE KINASE YKOH"/>
    <property type="match status" value="1"/>
</dbReference>
<dbReference type="Pfam" id="PF00672">
    <property type="entry name" value="HAMP"/>
    <property type="match status" value="1"/>
</dbReference>
<dbReference type="Pfam" id="PF02518">
    <property type="entry name" value="HATPase_c"/>
    <property type="match status" value="1"/>
</dbReference>
<dbReference type="Pfam" id="PF00512">
    <property type="entry name" value="HisKA"/>
    <property type="match status" value="1"/>
</dbReference>
<dbReference type="PRINTS" id="PR00344">
    <property type="entry name" value="BCTRLSENSOR"/>
</dbReference>
<dbReference type="SMART" id="SM00304">
    <property type="entry name" value="HAMP"/>
    <property type="match status" value="1"/>
</dbReference>
<dbReference type="SMART" id="SM00387">
    <property type="entry name" value="HATPase_c"/>
    <property type="match status" value="1"/>
</dbReference>
<dbReference type="SMART" id="SM00388">
    <property type="entry name" value="HisKA"/>
    <property type="match status" value="1"/>
</dbReference>
<dbReference type="SUPFAM" id="SSF55874">
    <property type="entry name" value="ATPase domain of HSP90 chaperone/DNA topoisomerase II/histidine kinase"/>
    <property type="match status" value="1"/>
</dbReference>
<dbReference type="SUPFAM" id="SSF47384">
    <property type="entry name" value="Homodimeric domain of signal transducing histidine kinase"/>
    <property type="match status" value="1"/>
</dbReference>
<dbReference type="PROSITE" id="PS50885">
    <property type="entry name" value="HAMP"/>
    <property type="match status" value="1"/>
</dbReference>
<dbReference type="PROSITE" id="PS50109">
    <property type="entry name" value="HIS_KIN"/>
    <property type="match status" value="1"/>
</dbReference>
<accession>P9WGK6</accession>
<accession>L0T543</accession>
<accession>P0A5Z8</accession>
<accession>Q10560</accession>